<keyword id="KW-0046">Antibiotic resistance</keyword>
<keyword id="KW-1003">Cell membrane</keyword>
<keyword id="KW-0133">Cell shape</keyword>
<keyword id="KW-0961">Cell wall biogenesis/degradation</keyword>
<keyword id="KW-0378">Hydrolase</keyword>
<keyword id="KW-0472">Membrane</keyword>
<keyword id="KW-0573">Peptidoglycan synthesis</keyword>
<keyword id="KW-1185">Reference proteome</keyword>
<keyword id="KW-0812">Transmembrane</keyword>
<keyword id="KW-1133">Transmembrane helix</keyword>
<reference key="1">
    <citation type="journal article" date="2003" name="Proc. Natl. Acad. Sci. U.S.A.">
        <title>The genome sequence of Clostridium tetani, the causative agent of tetanus disease.</title>
        <authorList>
            <person name="Brueggemann H."/>
            <person name="Baeumer S."/>
            <person name="Fricke W.F."/>
            <person name="Wiezer A."/>
            <person name="Liesegang H."/>
            <person name="Decker I."/>
            <person name="Herzberg C."/>
            <person name="Martinez-Arias R."/>
            <person name="Merkl R."/>
            <person name="Henne A."/>
            <person name="Gottschalk G."/>
        </authorList>
    </citation>
    <scope>NUCLEOTIDE SEQUENCE [LARGE SCALE GENOMIC DNA]</scope>
    <source>
        <strain>Massachusetts / E88</strain>
    </source>
</reference>
<sequence>MLLILKAIILAIVEGLTEFVPVSSTGHLILVSDVINFKGDYANLFNVVIQLGAILAVVVVYWDKLLNSVKDIFAPDRRGLRFWINIVVACIPAVIFGFSLDDYIDKYLFNPITVAIGLVIGGILMIIVENKYRRRSKTKNIYDMKLRQSIFVGMFQCLALWPGMSRSASTIMGGWIAGLSPVVAAEFSFFLAIPVMVGASGLKLVKSGFYMTNIEFIALIVGFVGAFLVSLVVIEKFIKFLQKKPMRIFAIYRIFIGAILLILAIFKIVTI</sequence>
<organism>
    <name type="scientific">Clostridium tetani (strain Massachusetts / E88)</name>
    <dbReference type="NCBI Taxonomy" id="212717"/>
    <lineage>
        <taxon>Bacteria</taxon>
        <taxon>Bacillati</taxon>
        <taxon>Bacillota</taxon>
        <taxon>Clostridia</taxon>
        <taxon>Eubacteriales</taxon>
        <taxon>Clostridiaceae</taxon>
        <taxon>Clostridium</taxon>
    </lineage>
</organism>
<gene>
    <name evidence="1" type="primary">uppP</name>
    <name type="synonym">bacA</name>
    <name type="synonym">upk</name>
    <name type="ordered locus">CTC_00545</name>
</gene>
<name>UPPP_CLOTE</name>
<dbReference type="EC" id="3.6.1.27" evidence="1"/>
<dbReference type="EMBL" id="AE015927">
    <property type="protein sequence ID" value="AAO35165.1"/>
    <property type="molecule type" value="Genomic_DNA"/>
</dbReference>
<dbReference type="RefSeq" id="WP_011098832.1">
    <property type="nucleotide sequence ID" value="NC_004557.1"/>
</dbReference>
<dbReference type="SMR" id="Q898B8"/>
<dbReference type="STRING" id="212717.CTC_00545"/>
<dbReference type="GeneID" id="24254425"/>
<dbReference type="KEGG" id="ctc:CTC_00545"/>
<dbReference type="HOGENOM" id="CLU_060296_2_0_9"/>
<dbReference type="OrthoDB" id="9808289at2"/>
<dbReference type="Proteomes" id="UP000001412">
    <property type="component" value="Chromosome"/>
</dbReference>
<dbReference type="GO" id="GO:0005886">
    <property type="term" value="C:plasma membrane"/>
    <property type="evidence" value="ECO:0007669"/>
    <property type="project" value="UniProtKB-SubCell"/>
</dbReference>
<dbReference type="GO" id="GO:0050380">
    <property type="term" value="F:undecaprenyl-diphosphatase activity"/>
    <property type="evidence" value="ECO:0007669"/>
    <property type="project" value="UniProtKB-UniRule"/>
</dbReference>
<dbReference type="GO" id="GO:0071555">
    <property type="term" value="P:cell wall organization"/>
    <property type="evidence" value="ECO:0007669"/>
    <property type="project" value="UniProtKB-KW"/>
</dbReference>
<dbReference type="GO" id="GO:0009252">
    <property type="term" value="P:peptidoglycan biosynthetic process"/>
    <property type="evidence" value="ECO:0007669"/>
    <property type="project" value="UniProtKB-KW"/>
</dbReference>
<dbReference type="GO" id="GO:0008360">
    <property type="term" value="P:regulation of cell shape"/>
    <property type="evidence" value="ECO:0007669"/>
    <property type="project" value="UniProtKB-KW"/>
</dbReference>
<dbReference type="GO" id="GO:0046677">
    <property type="term" value="P:response to antibiotic"/>
    <property type="evidence" value="ECO:0007669"/>
    <property type="project" value="UniProtKB-UniRule"/>
</dbReference>
<dbReference type="HAMAP" id="MF_01006">
    <property type="entry name" value="Undec_diphosphatase"/>
    <property type="match status" value="1"/>
</dbReference>
<dbReference type="InterPro" id="IPR003824">
    <property type="entry name" value="UppP"/>
</dbReference>
<dbReference type="NCBIfam" id="NF001389">
    <property type="entry name" value="PRK00281.1-2"/>
    <property type="match status" value="1"/>
</dbReference>
<dbReference type="NCBIfam" id="NF001390">
    <property type="entry name" value="PRK00281.1-4"/>
    <property type="match status" value="1"/>
</dbReference>
<dbReference type="NCBIfam" id="TIGR00753">
    <property type="entry name" value="undec_PP_bacA"/>
    <property type="match status" value="1"/>
</dbReference>
<dbReference type="PANTHER" id="PTHR30622">
    <property type="entry name" value="UNDECAPRENYL-DIPHOSPHATASE"/>
    <property type="match status" value="1"/>
</dbReference>
<dbReference type="PANTHER" id="PTHR30622:SF3">
    <property type="entry name" value="UNDECAPRENYL-DIPHOSPHATASE"/>
    <property type="match status" value="1"/>
</dbReference>
<dbReference type="Pfam" id="PF02673">
    <property type="entry name" value="BacA"/>
    <property type="match status" value="1"/>
</dbReference>
<feature type="chain" id="PRO_0000151137" description="Undecaprenyl-diphosphatase">
    <location>
        <begin position="1"/>
        <end position="271"/>
    </location>
</feature>
<feature type="transmembrane region" description="Helical" evidence="1">
    <location>
        <begin position="2"/>
        <end position="22"/>
    </location>
</feature>
<feature type="transmembrane region" description="Helical" evidence="1">
    <location>
        <begin position="42"/>
        <end position="62"/>
    </location>
</feature>
<feature type="transmembrane region" description="Helical" evidence="1">
    <location>
        <begin position="80"/>
        <end position="100"/>
    </location>
</feature>
<feature type="transmembrane region" description="Helical" evidence="1">
    <location>
        <begin position="108"/>
        <end position="128"/>
    </location>
</feature>
<feature type="transmembrane region" description="Helical" evidence="1">
    <location>
        <begin position="149"/>
        <end position="168"/>
    </location>
</feature>
<feature type="transmembrane region" description="Helical" evidence="1">
    <location>
        <begin position="175"/>
        <end position="195"/>
    </location>
</feature>
<feature type="transmembrane region" description="Helical" evidence="1">
    <location>
        <begin position="214"/>
        <end position="234"/>
    </location>
</feature>
<feature type="transmembrane region" description="Helical" evidence="1">
    <location>
        <begin position="248"/>
        <end position="268"/>
    </location>
</feature>
<comment type="function">
    <text evidence="1">Catalyzes the dephosphorylation of undecaprenyl diphosphate (UPP). Confers resistance to bacitracin.</text>
</comment>
<comment type="catalytic activity">
    <reaction evidence="1">
        <text>di-trans,octa-cis-undecaprenyl diphosphate + H2O = di-trans,octa-cis-undecaprenyl phosphate + phosphate + H(+)</text>
        <dbReference type="Rhea" id="RHEA:28094"/>
        <dbReference type="ChEBI" id="CHEBI:15377"/>
        <dbReference type="ChEBI" id="CHEBI:15378"/>
        <dbReference type="ChEBI" id="CHEBI:43474"/>
        <dbReference type="ChEBI" id="CHEBI:58405"/>
        <dbReference type="ChEBI" id="CHEBI:60392"/>
        <dbReference type="EC" id="3.6.1.27"/>
    </reaction>
</comment>
<comment type="subcellular location">
    <subcellularLocation>
        <location evidence="1">Cell membrane</location>
        <topology evidence="1">Multi-pass membrane protein</topology>
    </subcellularLocation>
</comment>
<comment type="miscellaneous">
    <text>Bacitracin is thought to be involved in the inhibition of peptidoglycan synthesis by sequestering undecaprenyl diphosphate, thereby reducing the pool of lipid carrier available.</text>
</comment>
<comment type="similarity">
    <text evidence="1">Belongs to the UppP family.</text>
</comment>
<proteinExistence type="inferred from homology"/>
<evidence type="ECO:0000255" key="1">
    <source>
        <dbReference type="HAMAP-Rule" id="MF_01006"/>
    </source>
</evidence>
<accession>Q898B8</accession>
<protein>
    <recommendedName>
        <fullName evidence="1">Undecaprenyl-diphosphatase</fullName>
        <ecNumber evidence="1">3.6.1.27</ecNumber>
    </recommendedName>
    <alternativeName>
        <fullName evidence="1">Bacitracin resistance protein</fullName>
    </alternativeName>
    <alternativeName>
        <fullName evidence="1">Undecaprenyl pyrophosphate phosphatase</fullName>
    </alternativeName>
</protein>